<protein>
    <recommendedName>
        <fullName evidence="2">Caerulein precursor fragment-related peptide BM5</fullName>
    </recommendedName>
    <alternativeName>
        <fullName evidence="2">CPF-RP-BM5</fullName>
    </alternativeName>
</protein>
<organism evidence="2">
    <name type="scientific">Xenopus boumbaensis</name>
    <name type="common">Mawa clawed frog</name>
    <dbReference type="NCBI Taxonomy" id="288550"/>
    <lineage>
        <taxon>Eukaryota</taxon>
        <taxon>Metazoa</taxon>
        <taxon>Chordata</taxon>
        <taxon>Craniata</taxon>
        <taxon>Vertebrata</taxon>
        <taxon>Euteleostomi</taxon>
        <taxon>Amphibia</taxon>
        <taxon>Batrachia</taxon>
        <taxon>Anura</taxon>
        <taxon>Pipoidea</taxon>
        <taxon>Pipidae</taxon>
        <taxon>Xenopodinae</taxon>
        <taxon>Xenopus</taxon>
        <taxon>Xenopus</taxon>
    </lineage>
</organism>
<accession>C0HKL4</accession>
<feature type="peptide" id="PRO_0000440789" description="Caerulein precursor fragment-related peptide BM5" evidence="1">
    <location>
        <begin position="1"/>
        <end position="17"/>
    </location>
</feature>
<feature type="modified residue" description="Leucine amide" evidence="1">
    <location>
        <position position="17"/>
    </location>
</feature>
<keyword id="KW-0027">Amidation</keyword>
<keyword id="KW-0903">Direct protein sequencing</keyword>
<keyword id="KW-0964">Secreted</keyword>
<comment type="subcellular location">
    <subcellularLocation>
        <location evidence="1">Secreted</location>
    </subcellularLocation>
</comment>
<comment type="tissue specificity">
    <text evidence="4">Expressed by the skin glands.</text>
</comment>
<comment type="mass spectrometry"/>
<evidence type="ECO:0000269" key="1">
    <source>
    </source>
</evidence>
<evidence type="ECO:0000303" key="2">
    <source>
    </source>
</evidence>
<evidence type="ECO:0000305" key="3"/>
<evidence type="ECO:0000305" key="4">
    <source>
    </source>
</evidence>
<name>CRBM5_XENBM</name>
<reference evidence="3" key="1">
    <citation type="journal article" date="2015" name="Peptides">
        <title>Host-defense and trefoil factor family peptides in skin secretions of the Mawa clawed frog Xenopus boumbaensis (Pipidae).</title>
        <authorList>
            <person name="Conlon J.M."/>
            <person name="Mechkarska M."/>
            <person name="Kolodziejek J."/>
            <person name="Leprince J."/>
            <person name="Coquet L."/>
            <person name="Jouenne T."/>
            <person name="Vaudry H."/>
            <person name="Nowotny N."/>
            <person name="King J.D."/>
        </authorList>
    </citation>
    <scope>PROTEIN SEQUENCE</scope>
    <scope>SUBCELLULAR LOCATION</scope>
    <scope>MASS SPECTROMETRY</scope>
    <scope>AMIDATION AT LEU-17</scope>
    <source>
        <tissue evidence="2">Skin secretion</tissue>
    </source>
</reference>
<proteinExistence type="evidence at protein level"/>
<sequence>GLGSLVGNALRIGAKLL</sequence>
<dbReference type="GO" id="GO:0005576">
    <property type="term" value="C:extracellular region"/>
    <property type="evidence" value="ECO:0007669"/>
    <property type="project" value="UniProtKB-SubCell"/>
</dbReference>